<comment type="function">
    <text evidence="1">Together with the chaperonin GroEL, plays an essential role in assisting protein folding. The GroEL-GroES system forms a nano-cage that allows encapsulation of the non-native substrate proteins and provides a physical environment optimized to promote and accelerate protein folding. GroES binds to the apical surface of the GroEL ring, thereby capping the opening of the GroEL channel.</text>
</comment>
<comment type="subunit">
    <text evidence="1">Heptamer of 7 subunits arranged in a ring. Interacts with the chaperonin GroEL.</text>
</comment>
<comment type="subcellular location">
    <subcellularLocation>
        <location evidence="1">Cytoplasm</location>
    </subcellularLocation>
</comment>
<comment type="similarity">
    <text evidence="1">Belongs to the GroES chaperonin family.</text>
</comment>
<proteinExistence type="inferred from homology"/>
<sequence>MRLKPLGDRVVVKVIQAEEVTKGGVILPGTAKEKPQQGEVVAVGTGQYIDGKKVELEVKVGDRVIFSKYAGTEVKLDGEEYLLLRESDILAIIE</sequence>
<gene>
    <name evidence="1" type="primary">groES</name>
    <name evidence="1" type="synonym">groS</name>
    <name type="ordered locus">Teth39_1722</name>
</gene>
<name>CH10_THEP3</name>
<accession>B0KBR4</accession>
<reference key="1">
    <citation type="submission" date="2008-01" db="EMBL/GenBank/DDBJ databases">
        <title>Complete sequence of Thermoanaerobacter pseudethanolicus 39E.</title>
        <authorList>
            <person name="Copeland A."/>
            <person name="Lucas S."/>
            <person name="Lapidus A."/>
            <person name="Barry K."/>
            <person name="Glavina del Rio T."/>
            <person name="Dalin E."/>
            <person name="Tice H."/>
            <person name="Pitluck S."/>
            <person name="Bruce D."/>
            <person name="Goodwin L."/>
            <person name="Saunders E."/>
            <person name="Brettin T."/>
            <person name="Detter J.C."/>
            <person name="Han C."/>
            <person name="Schmutz J."/>
            <person name="Larimer F."/>
            <person name="Land M."/>
            <person name="Hauser L."/>
            <person name="Kyrpides N."/>
            <person name="Lykidis A."/>
            <person name="Hemme C."/>
            <person name="Fields M.W."/>
            <person name="He Z."/>
            <person name="Zhou J."/>
            <person name="Richardson P."/>
        </authorList>
    </citation>
    <scope>NUCLEOTIDE SEQUENCE [LARGE SCALE GENOMIC DNA]</scope>
    <source>
        <strain>ATCC 33223 / DSM 2355 / 39E</strain>
    </source>
</reference>
<keyword id="KW-0143">Chaperone</keyword>
<keyword id="KW-0963">Cytoplasm</keyword>
<keyword id="KW-1185">Reference proteome</keyword>
<dbReference type="EMBL" id="CP000924">
    <property type="protein sequence ID" value="ABY95359.1"/>
    <property type="molecule type" value="Genomic_DNA"/>
</dbReference>
<dbReference type="RefSeq" id="WP_003866817.1">
    <property type="nucleotide sequence ID" value="NC_010321.1"/>
</dbReference>
<dbReference type="SMR" id="B0KBR4"/>
<dbReference type="STRING" id="340099.Teth39_1722"/>
<dbReference type="KEGG" id="tpd:Teth39_1722"/>
<dbReference type="eggNOG" id="COG0234">
    <property type="taxonomic scope" value="Bacteria"/>
</dbReference>
<dbReference type="HOGENOM" id="CLU_132825_2_0_9"/>
<dbReference type="Proteomes" id="UP000002156">
    <property type="component" value="Chromosome"/>
</dbReference>
<dbReference type="GO" id="GO:0005737">
    <property type="term" value="C:cytoplasm"/>
    <property type="evidence" value="ECO:0007669"/>
    <property type="project" value="UniProtKB-SubCell"/>
</dbReference>
<dbReference type="GO" id="GO:0005524">
    <property type="term" value="F:ATP binding"/>
    <property type="evidence" value="ECO:0007669"/>
    <property type="project" value="InterPro"/>
</dbReference>
<dbReference type="GO" id="GO:0046872">
    <property type="term" value="F:metal ion binding"/>
    <property type="evidence" value="ECO:0007669"/>
    <property type="project" value="TreeGrafter"/>
</dbReference>
<dbReference type="GO" id="GO:0044183">
    <property type="term" value="F:protein folding chaperone"/>
    <property type="evidence" value="ECO:0007669"/>
    <property type="project" value="InterPro"/>
</dbReference>
<dbReference type="GO" id="GO:0051087">
    <property type="term" value="F:protein-folding chaperone binding"/>
    <property type="evidence" value="ECO:0007669"/>
    <property type="project" value="TreeGrafter"/>
</dbReference>
<dbReference type="GO" id="GO:0051082">
    <property type="term" value="F:unfolded protein binding"/>
    <property type="evidence" value="ECO:0007669"/>
    <property type="project" value="TreeGrafter"/>
</dbReference>
<dbReference type="GO" id="GO:0051085">
    <property type="term" value="P:chaperone cofactor-dependent protein refolding"/>
    <property type="evidence" value="ECO:0007669"/>
    <property type="project" value="TreeGrafter"/>
</dbReference>
<dbReference type="CDD" id="cd00320">
    <property type="entry name" value="cpn10"/>
    <property type="match status" value="1"/>
</dbReference>
<dbReference type="FunFam" id="2.30.33.40:FF:000001">
    <property type="entry name" value="10 kDa chaperonin"/>
    <property type="match status" value="1"/>
</dbReference>
<dbReference type="Gene3D" id="2.30.33.40">
    <property type="entry name" value="GroES chaperonin"/>
    <property type="match status" value="1"/>
</dbReference>
<dbReference type="HAMAP" id="MF_00580">
    <property type="entry name" value="CH10"/>
    <property type="match status" value="1"/>
</dbReference>
<dbReference type="InterPro" id="IPR020818">
    <property type="entry name" value="Chaperonin_GroES"/>
</dbReference>
<dbReference type="InterPro" id="IPR037124">
    <property type="entry name" value="Chaperonin_GroES_sf"/>
</dbReference>
<dbReference type="InterPro" id="IPR018369">
    <property type="entry name" value="Chaprnonin_Cpn10_CS"/>
</dbReference>
<dbReference type="InterPro" id="IPR011032">
    <property type="entry name" value="GroES-like_sf"/>
</dbReference>
<dbReference type="NCBIfam" id="NF001527">
    <property type="entry name" value="PRK00364.1-2"/>
    <property type="match status" value="1"/>
</dbReference>
<dbReference type="NCBIfam" id="NF001531">
    <property type="entry name" value="PRK00364.2-2"/>
    <property type="match status" value="1"/>
</dbReference>
<dbReference type="NCBIfam" id="NF001533">
    <property type="entry name" value="PRK00364.2-4"/>
    <property type="match status" value="1"/>
</dbReference>
<dbReference type="NCBIfam" id="NF001534">
    <property type="entry name" value="PRK00364.2-5"/>
    <property type="match status" value="1"/>
</dbReference>
<dbReference type="PANTHER" id="PTHR10772">
    <property type="entry name" value="10 KDA HEAT SHOCK PROTEIN"/>
    <property type="match status" value="1"/>
</dbReference>
<dbReference type="PANTHER" id="PTHR10772:SF58">
    <property type="entry name" value="CO-CHAPERONIN GROES"/>
    <property type="match status" value="1"/>
</dbReference>
<dbReference type="Pfam" id="PF00166">
    <property type="entry name" value="Cpn10"/>
    <property type="match status" value="1"/>
</dbReference>
<dbReference type="PRINTS" id="PR00297">
    <property type="entry name" value="CHAPERONIN10"/>
</dbReference>
<dbReference type="SMART" id="SM00883">
    <property type="entry name" value="Cpn10"/>
    <property type="match status" value="1"/>
</dbReference>
<dbReference type="SUPFAM" id="SSF50129">
    <property type="entry name" value="GroES-like"/>
    <property type="match status" value="1"/>
</dbReference>
<dbReference type="PROSITE" id="PS00681">
    <property type="entry name" value="CHAPERONINS_CPN10"/>
    <property type="match status" value="1"/>
</dbReference>
<evidence type="ECO:0000255" key="1">
    <source>
        <dbReference type="HAMAP-Rule" id="MF_00580"/>
    </source>
</evidence>
<feature type="chain" id="PRO_1000129718" description="Co-chaperonin GroES">
    <location>
        <begin position="1"/>
        <end position="94"/>
    </location>
</feature>
<protein>
    <recommendedName>
        <fullName evidence="1">Co-chaperonin GroES</fullName>
    </recommendedName>
    <alternativeName>
        <fullName evidence="1">10 kDa chaperonin</fullName>
    </alternativeName>
    <alternativeName>
        <fullName evidence="1">Chaperonin-10</fullName>
        <shortName evidence="1">Cpn10</shortName>
    </alternativeName>
</protein>
<organism>
    <name type="scientific">Thermoanaerobacter pseudethanolicus (strain ATCC 33223 / 39E)</name>
    <name type="common">Clostridium thermohydrosulfuricum</name>
    <dbReference type="NCBI Taxonomy" id="340099"/>
    <lineage>
        <taxon>Bacteria</taxon>
        <taxon>Bacillati</taxon>
        <taxon>Bacillota</taxon>
        <taxon>Clostridia</taxon>
        <taxon>Thermoanaerobacterales</taxon>
        <taxon>Thermoanaerobacteraceae</taxon>
        <taxon>Thermoanaerobacter</taxon>
    </lineage>
</organism>